<organism>
    <name type="scientific">Escherichia coli O7:K1 (strain IAI39 / ExPEC)</name>
    <dbReference type="NCBI Taxonomy" id="585057"/>
    <lineage>
        <taxon>Bacteria</taxon>
        <taxon>Pseudomonadati</taxon>
        <taxon>Pseudomonadota</taxon>
        <taxon>Gammaproteobacteria</taxon>
        <taxon>Enterobacterales</taxon>
        <taxon>Enterobacteriaceae</taxon>
        <taxon>Escherichia</taxon>
    </lineage>
</organism>
<sequence length="478" mass="54508">MTLSFITRWCDELPETYTALSPTPLNKARLIWHNAELANTLSIPSSLFKNGAGVWGGETLLPGMSPLAQVYSGHQFGVWAGQLGDGRGILLGEQQLADGTTMDWHLKGAGLTPYSRMGDGRAVLRSTIRESLASEAMHYLGIPTTRALSIVTSDSPVYRETVEPGAMLMRVAPSHLRFGHFEHFYYRREPEKVRQLADFAIRHYWSHLADDEDKYRLWFSDVVARTASLIAQWQTVGFAHGVMNTDNMSLLGLTLDYGPFGFLDDYEPGFICNHSDHQGRYSFDNQPAVALWNLQRLAQTLSPFVAVDALNEALDSYQQVLLTHYGQRMRQKLGFMTEQKEDNALLNELFSLMARERSDYTRTFRMLSLTEQHSAASPLRDEFIDRAAFDDWFARYRRRLQQDEVSDSERQQLMQSVNPALVLRNWLAQRAIEAAEKGDMTELHRLHEALRNPFSDRDDDYVSRPPDWGKRLEVSCSS</sequence>
<evidence type="ECO:0000255" key="1">
    <source>
        <dbReference type="HAMAP-Rule" id="MF_00692"/>
    </source>
</evidence>
<gene>
    <name evidence="1" type="primary">ydiU</name>
    <name evidence="1" type="synonym">selO</name>
    <name type="ordered locus">ECIAI39_1347</name>
</gene>
<dbReference type="EC" id="2.7.7.-" evidence="1"/>
<dbReference type="EC" id="2.7.7.108" evidence="1"/>
<dbReference type="EMBL" id="CU928164">
    <property type="protein sequence ID" value="CAR17481.1"/>
    <property type="molecule type" value="Genomic_DNA"/>
</dbReference>
<dbReference type="RefSeq" id="WP_000175576.1">
    <property type="nucleotide sequence ID" value="NC_011750.1"/>
</dbReference>
<dbReference type="RefSeq" id="YP_002407355.1">
    <property type="nucleotide sequence ID" value="NC_011750.1"/>
</dbReference>
<dbReference type="SMR" id="B7NTS5"/>
<dbReference type="STRING" id="585057.ECIAI39_1347"/>
<dbReference type="KEGG" id="ect:ECIAI39_1347"/>
<dbReference type="PATRIC" id="fig|585057.6.peg.1409"/>
<dbReference type="HOGENOM" id="CLU_010245_4_1_6"/>
<dbReference type="Proteomes" id="UP000000749">
    <property type="component" value="Chromosome"/>
</dbReference>
<dbReference type="GO" id="GO:0070733">
    <property type="term" value="F:AMPylase activity"/>
    <property type="evidence" value="ECO:0007669"/>
    <property type="project" value="RHEA"/>
</dbReference>
<dbReference type="GO" id="GO:0005524">
    <property type="term" value="F:ATP binding"/>
    <property type="evidence" value="ECO:0007669"/>
    <property type="project" value="UniProtKB-UniRule"/>
</dbReference>
<dbReference type="GO" id="GO:0000287">
    <property type="term" value="F:magnesium ion binding"/>
    <property type="evidence" value="ECO:0007669"/>
    <property type="project" value="UniProtKB-UniRule"/>
</dbReference>
<dbReference type="HAMAP" id="MF_00692">
    <property type="entry name" value="YdiU_SelO"/>
    <property type="match status" value="1"/>
</dbReference>
<dbReference type="InterPro" id="IPR054838">
    <property type="entry name" value="adnlytase_SelO"/>
</dbReference>
<dbReference type="InterPro" id="IPR003846">
    <property type="entry name" value="SelO"/>
</dbReference>
<dbReference type="NCBIfam" id="NF040880">
    <property type="entry name" value="adnlytase_SelO"/>
    <property type="match status" value="1"/>
</dbReference>
<dbReference type="NCBIfam" id="NF000658">
    <property type="entry name" value="PRK00029.1"/>
    <property type="match status" value="1"/>
</dbReference>
<dbReference type="PANTHER" id="PTHR32057">
    <property type="entry name" value="PROTEIN ADENYLYLTRANSFERASE SELO, MITOCHONDRIAL"/>
    <property type="match status" value="1"/>
</dbReference>
<dbReference type="PANTHER" id="PTHR32057:SF14">
    <property type="entry name" value="PROTEIN ADENYLYLTRANSFERASE SELO, MITOCHONDRIAL"/>
    <property type="match status" value="1"/>
</dbReference>
<dbReference type="Pfam" id="PF02696">
    <property type="entry name" value="SelO"/>
    <property type="match status" value="1"/>
</dbReference>
<protein>
    <recommendedName>
        <fullName evidence="1">Protein nucleotidyltransferase YdiU</fullName>
        <ecNumber evidence="1">2.7.7.-</ecNumber>
    </recommendedName>
    <alternativeName>
        <fullName evidence="1">Protein adenylyltransferase YdiU</fullName>
        <ecNumber evidence="1">2.7.7.108</ecNumber>
    </alternativeName>
    <alternativeName>
        <fullName evidence="1">Protein uridylyltransferase YdiU</fullName>
        <ecNumber evidence="1">2.7.7.-</ecNumber>
    </alternativeName>
</protein>
<name>SELO_ECO7I</name>
<comment type="function">
    <text evidence="1">Nucleotidyltransferase involved in the post-translational modification of proteins. It can catalyze the addition of adenosine monophosphate (AMP) or uridine monophosphate (UMP) to a protein, resulting in modifications known as AMPylation and UMPylation.</text>
</comment>
<comment type="catalytic activity">
    <reaction evidence="1">
        <text>L-seryl-[protein] + ATP = 3-O-(5'-adenylyl)-L-seryl-[protein] + diphosphate</text>
        <dbReference type="Rhea" id="RHEA:58120"/>
        <dbReference type="Rhea" id="RHEA-COMP:9863"/>
        <dbReference type="Rhea" id="RHEA-COMP:15073"/>
        <dbReference type="ChEBI" id="CHEBI:29999"/>
        <dbReference type="ChEBI" id="CHEBI:30616"/>
        <dbReference type="ChEBI" id="CHEBI:33019"/>
        <dbReference type="ChEBI" id="CHEBI:142516"/>
        <dbReference type="EC" id="2.7.7.108"/>
    </reaction>
</comment>
<comment type="catalytic activity">
    <reaction evidence="1">
        <text>L-threonyl-[protein] + ATP = 3-O-(5'-adenylyl)-L-threonyl-[protein] + diphosphate</text>
        <dbReference type="Rhea" id="RHEA:54292"/>
        <dbReference type="Rhea" id="RHEA-COMP:11060"/>
        <dbReference type="Rhea" id="RHEA-COMP:13847"/>
        <dbReference type="ChEBI" id="CHEBI:30013"/>
        <dbReference type="ChEBI" id="CHEBI:30616"/>
        <dbReference type="ChEBI" id="CHEBI:33019"/>
        <dbReference type="ChEBI" id="CHEBI:138113"/>
        <dbReference type="EC" id="2.7.7.108"/>
    </reaction>
</comment>
<comment type="catalytic activity">
    <reaction evidence="1">
        <text>L-tyrosyl-[protein] + ATP = O-(5'-adenylyl)-L-tyrosyl-[protein] + diphosphate</text>
        <dbReference type="Rhea" id="RHEA:54288"/>
        <dbReference type="Rhea" id="RHEA-COMP:10136"/>
        <dbReference type="Rhea" id="RHEA-COMP:13846"/>
        <dbReference type="ChEBI" id="CHEBI:30616"/>
        <dbReference type="ChEBI" id="CHEBI:33019"/>
        <dbReference type="ChEBI" id="CHEBI:46858"/>
        <dbReference type="ChEBI" id="CHEBI:83624"/>
        <dbReference type="EC" id="2.7.7.108"/>
    </reaction>
</comment>
<comment type="catalytic activity">
    <reaction evidence="1">
        <text>L-histidyl-[protein] + UTP = N(tele)-(5'-uridylyl)-L-histidyl-[protein] + diphosphate</text>
        <dbReference type="Rhea" id="RHEA:83891"/>
        <dbReference type="Rhea" id="RHEA-COMP:9745"/>
        <dbReference type="Rhea" id="RHEA-COMP:20239"/>
        <dbReference type="ChEBI" id="CHEBI:29979"/>
        <dbReference type="ChEBI" id="CHEBI:33019"/>
        <dbReference type="ChEBI" id="CHEBI:46398"/>
        <dbReference type="ChEBI" id="CHEBI:233474"/>
    </reaction>
</comment>
<comment type="catalytic activity">
    <reaction evidence="1">
        <text>L-seryl-[protein] + UTP = O-(5'-uridylyl)-L-seryl-[protein] + diphosphate</text>
        <dbReference type="Rhea" id="RHEA:64604"/>
        <dbReference type="Rhea" id="RHEA-COMP:9863"/>
        <dbReference type="Rhea" id="RHEA-COMP:16635"/>
        <dbReference type="ChEBI" id="CHEBI:29999"/>
        <dbReference type="ChEBI" id="CHEBI:33019"/>
        <dbReference type="ChEBI" id="CHEBI:46398"/>
        <dbReference type="ChEBI" id="CHEBI:156051"/>
    </reaction>
</comment>
<comment type="catalytic activity">
    <reaction evidence="1">
        <text>L-tyrosyl-[protein] + UTP = O-(5'-uridylyl)-L-tyrosyl-[protein] + diphosphate</text>
        <dbReference type="Rhea" id="RHEA:83887"/>
        <dbReference type="Rhea" id="RHEA-COMP:10136"/>
        <dbReference type="Rhea" id="RHEA-COMP:20238"/>
        <dbReference type="ChEBI" id="CHEBI:33019"/>
        <dbReference type="ChEBI" id="CHEBI:46398"/>
        <dbReference type="ChEBI" id="CHEBI:46858"/>
        <dbReference type="ChEBI" id="CHEBI:90602"/>
    </reaction>
</comment>
<comment type="cofactor">
    <cofactor evidence="1">
        <name>Mg(2+)</name>
        <dbReference type="ChEBI" id="CHEBI:18420"/>
    </cofactor>
    <cofactor evidence="1">
        <name>Mn(2+)</name>
        <dbReference type="ChEBI" id="CHEBI:29035"/>
    </cofactor>
</comment>
<comment type="similarity">
    <text evidence="1">Belongs to the SELO family.</text>
</comment>
<accession>B7NTS5</accession>
<proteinExistence type="inferred from homology"/>
<feature type="chain" id="PRO_1000132107" description="Protein nucleotidyltransferase YdiU">
    <location>
        <begin position="1"/>
        <end position="478"/>
    </location>
</feature>
<feature type="active site" description="Proton acceptor" evidence="1">
    <location>
        <position position="246"/>
    </location>
</feature>
<feature type="binding site" evidence="1">
    <location>
        <position position="84"/>
    </location>
    <ligand>
        <name>ATP</name>
        <dbReference type="ChEBI" id="CHEBI:30616"/>
    </ligand>
</feature>
<feature type="binding site" evidence="1">
    <location>
        <position position="86"/>
    </location>
    <ligand>
        <name>ATP</name>
        <dbReference type="ChEBI" id="CHEBI:30616"/>
    </ligand>
</feature>
<feature type="binding site" evidence="1">
    <location>
        <position position="87"/>
    </location>
    <ligand>
        <name>ATP</name>
        <dbReference type="ChEBI" id="CHEBI:30616"/>
    </ligand>
</feature>
<feature type="binding site" evidence="1">
    <location>
        <position position="107"/>
    </location>
    <ligand>
        <name>ATP</name>
        <dbReference type="ChEBI" id="CHEBI:30616"/>
    </ligand>
</feature>
<feature type="binding site" evidence="1">
    <location>
        <position position="119"/>
    </location>
    <ligand>
        <name>ATP</name>
        <dbReference type="ChEBI" id="CHEBI:30616"/>
    </ligand>
</feature>
<feature type="binding site" evidence="1">
    <location>
        <position position="120"/>
    </location>
    <ligand>
        <name>ATP</name>
        <dbReference type="ChEBI" id="CHEBI:30616"/>
    </ligand>
</feature>
<feature type="binding site" evidence="1">
    <location>
        <position position="170"/>
    </location>
    <ligand>
        <name>ATP</name>
        <dbReference type="ChEBI" id="CHEBI:30616"/>
    </ligand>
</feature>
<feature type="binding site" evidence="1">
    <location>
        <position position="177"/>
    </location>
    <ligand>
        <name>ATP</name>
        <dbReference type="ChEBI" id="CHEBI:30616"/>
    </ligand>
</feature>
<feature type="binding site" evidence="1">
    <location>
        <position position="247"/>
    </location>
    <ligand>
        <name>Mg(2+)</name>
        <dbReference type="ChEBI" id="CHEBI:18420"/>
    </ligand>
</feature>
<feature type="binding site" evidence="1">
    <location>
        <position position="256"/>
    </location>
    <ligand>
        <name>ATP</name>
        <dbReference type="ChEBI" id="CHEBI:30616"/>
    </ligand>
</feature>
<feature type="binding site" evidence="1">
    <location>
        <position position="256"/>
    </location>
    <ligand>
        <name>Mg(2+)</name>
        <dbReference type="ChEBI" id="CHEBI:18420"/>
    </ligand>
</feature>
<keyword id="KW-0067">ATP-binding</keyword>
<keyword id="KW-0460">Magnesium</keyword>
<keyword id="KW-0464">Manganese</keyword>
<keyword id="KW-0479">Metal-binding</keyword>
<keyword id="KW-0547">Nucleotide-binding</keyword>
<keyword id="KW-0548">Nucleotidyltransferase</keyword>
<keyword id="KW-0808">Transferase</keyword>
<reference key="1">
    <citation type="journal article" date="2009" name="PLoS Genet.">
        <title>Organised genome dynamics in the Escherichia coli species results in highly diverse adaptive paths.</title>
        <authorList>
            <person name="Touchon M."/>
            <person name="Hoede C."/>
            <person name="Tenaillon O."/>
            <person name="Barbe V."/>
            <person name="Baeriswyl S."/>
            <person name="Bidet P."/>
            <person name="Bingen E."/>
            <person name="Bonacorsi S."/>
            <person name="Bouchier C."/>
            <person name="Bouvet O."/>
            <person name="Calteau A."/>
            <person name="Chiapello H."/>
            <person name="Clermont O."/>
            <person name="Cruveiller S."/>
            <person name="Danchin A."/>
            <person name="Diard M."/>
            <person name="Dossat C."/>
            <person name="Karoui M.E."/>
            <person name="Frapy E."/>
            <person name="Garry L."/>
            <person name="Ghigo J.M."/>
            <person name="Gilles A.M."/>
            <person name="Johnson J."/>
            <person name="Le Bouguenec C."/>
            <person name="Lescat M."/>
            <person name="Mangenot S."/>
            <person name="Martinez-Jehanne V."/>
            <person name="Matic I."/>
            <person name="Nassif X."/>
            <person name="Oztas S."/>
            <person name="Petit M.A."/>
            <person name="Pichon C."/>
            <person name="Rouy Z."/>
            <person name="Ruf C.S."/>
            <person name="Schneider D."/>
            <person name="Tourret J."/>
            <person name="Vacherie B."/>
            <person name="Vallenet D."/>
            <person name="Medigue C."/>
            <person name="Rocha E.P.C."/>
            <person name="Denamur E."/>
        </authorList>
    </citation>
    <scope>NUCLEOTIDE SEQUENCE [LARGE SCALE GENOMIC DNA]</scope>
    <source>
        <strain>IAI39 / ExPEC</strain>
    </source>
</reference>